<organism>
    <name type="scientific">Pseudomonas putida (strain ATCC 700007 / DSM 6899 / JCM 31910 / BCRC 17059 / LMG 24140 / F1)</name>
    <dbReference type="NCBI Taxonomy" id="351746"/>
    <lineage>
        <taxon>Bacteria</taxon>
        <taxon>Pseudomonadati</taxon>
        <taxon>Pseudomonadota</taxon>
        <taxon>Gammaproteobacteria</taxon>
        <taxon>Pseudomonadales</taxon>
        <taxon>Pseudomonadaceae</taxon>
        <taxon>Pseudomonas</taxon>
    </lineage>
</organism>
<accession>A5W3S6</accession>
<keyword id="KW-1015">Disulfide bond</keyword>
<keyword id="KW-0574">Periplasm</keyword>
<keyword id="KW-0646">Protease inhibitor</keyword>
<keyword id="KW-0722">Serine protease inhibitor</keyword>
<keyword id="KW-0732">Signal</keyword>
<feature type="signal peptide" evidence="1">
    <location>
        <begin position="1"/>
        <end position="22"/>
    </location>
</feature>
<feature type="chain" id="PRO_5000252064" description="Ecotin">
    <location>
        <begin position="23"/>
        <end position="159"/>
    </location>
</feature>
<feature type="site" description="Reactive bond" evidence="1">
    <location>
        <begin position="102"/>
        <end position="103"/>
    </location>
</feature>
<feature type="disulfide bond" evidence="1">
    <location>
        <begin position="68"/>
        <end position="105"/>
    </location>
</feature>
<sequence length="159" mass="17401">MRPTPMTAILALSLAAAAPAMAASLKDIAPYPEAEKGFTRQVIHLPAQADESAYKLEILAGKTLQVDCNRQRLGGNLEARTLEGWGYNYYRLDNVSGPASTLMACPDGKKTEAFVPVVGDGFLLRYNSKLPVVVYVPKDVEVRYRVWSASQDVQKAKVE</sequence>
<reference key="1">
    <citation type="submission" date="2007-05" db="EMBL/GenBank/DDBJ databases">
        <title>Complete sequence of Pseudomonas putida F1.</title>
        <authorList>
            <consortium name="US DOE Joint Genome Institute"/>
            <person name="Copeland A."/>
            <person name="Lucas S."/>
            <person name="Lapidus A."/>
            <person name="Barry K."/>
            <person name="Detter J.C."/>
            <person name="Glavina del Rio T."/>
            <person name="Hammon N."/>
            <person name="Israni S."/>
            <person name="Dalin E."/>
            <person name="Tice H."/>
            <person name="Pitluck S."/>
            <person name="Chain P."/>
            <person name="Malfatti S."/>
            <person name="Shin M."/>
            <person name="Vergez L."/>
            <person name="Schmutz J."/>
            <person name="Larimer F."/>
            <person name="Land M."/>
            <person name="Hauser L."/>
            <person name="Kyrpides N."/>
            <person name="Lykidis A."/>
            <person name="Parales R."/>
            <person name="Richardson P."/>
        </authorList>
    </citation>
    <scope>NUCLEOTIDE SEQUENCE [LARGE SCALE GENOMIC DNA]</scope>
    <source>
        <strain>ATCC 700007 / DSM 6899 / JCM 31910 / BCRC 17059 / LMG 24140 / F1</strain>
    </source>
</reference>
<comment type="function">
    <text evidence="1">General inhibitor of family S1 serine proteases.</text>
</comment>
<comment type="subunit">
    <text evidence="1">Homodimer.</text>
</comment>
<comment type="subcellular location">
    <subcellularLocation>
        <location evidence="1">Periplasm</location>
    </subcellularLocation>
</comment>
<comment type="similarity">
    <text evidence="1">Belongs to the protease inhibitor I11 (ecotin) family.</text>
</comment>
<proteinExistence type="inferred from homology"/>
<name>ECOT_PSEP1</name>
<protein>
    <recommendedName>
        <fullName evidence="1">Ecotin</fullName>
    </recommendedName>
</protein>
<dbReference type="EMBL" id="CP000712">
    <property type="protein sequence ID" value="ABQ78786.1"/>
    <property type="molecule type" value="Genomic_DNA"/>
</dbReference>
<dbReference type="SMR" id="A5W3S6"/>
<dbReference type="MEROPS" id="I11.003"/>
<dbReference type="KEGG" id="ppf:Pput_2652"/>
<dbReference type="eggNOG" id="COG4574">
    <property type="taxonomic scope" value="Bacteria"/>
</dbReference>
<dbReference type="HOGENOM" id="CLU_111565_0_0_6"/>
<dbReference type="GO" id="GO:0042597">
    <property type="term" value="C:periplasmic space"/>
    <property type="evidence" value="ECO:0007669"/>
    <property type="project" value="UniProtKB-SubCell"/>
</dbReference>
<dbReference type="GO" id="GO:0004867">
    <property type="term" value="F:serine-type endopeptidase inhibitor activity"/>
    <property type="evidence" value="ECO:0007669"/>
    <property type="project" value="UniProtKB-UniRule"/>
</dbReference>
<dbReference type="CDD" id="cd00242">
    <property type="entry name" value="Ecotin"/>
    <property type="match status" value="1"/>
</dbReference>
<dbReference type="Gene3D" id="2.60.40.550">
    <property type="entry name" value="Ecotin"/>
    <property type="match status" value="1"/>
</dbReference>
<dbReference type="Gene3D" id="4.10.1230.10">
    <property type="entry name" value="Ecotin, trypsin inhibitor"/>
    <property type="match status" value="1"/>
</dbReference>
<dbReference type="HAMAP" id="MF_00706">
    <property type="entry name" value="Ecotin"/>
    <property type="match status" value="1"/>
</dbReference>
<dbReference type="InterPro" id="IPR027438">
    <property type="entry name" value="Ecotin_C"/>
</dbReference>
<dbReference type="InterPro" id="IPR036198">
    <property type="entry name" value="Ecotin_sf"/>
</dbReference>
<dbReference type="InterPro" id="IPR005658">
    <property type="entry name" value="Prot_inh_ecotin"/>
</dbReference>
<dbReference type="InterPro" id="IPR023084">
    <property type="entry name" value="Prot_inh_ecotin_gammaproteobac"/>
</dbReference>
<dbReference type="NCBIfam" id="NF002987">
    <property type="entry name" value="PRK03719.1"/>
    <property type="match status" value="1"/>
</dbReference>
<dbReference type="PANTHER" id="PTHR35890">
    <property type="match status" value="1"/>
</dbReference>
<dbReference type="PANTHER" id="PTHR35890:SF3">
    <property type="entry name" value="ECOTIN"/>
    <property type="match status" value="1"/>
</dbReference>
<dbReference type="Pfam" id="PF03974">
    <property type="entry name" value="Ecotin"/>
    <property type="match status" value="1"/>
</dbReference>
<dbReference type="PIRSF" id="PIRSF006865">
    <property type="entry name" value="Prot_inh_ecotin"/>
    <property type="match status" value="1"/>
</dbReference>
<dbReference type="SUPFAM" id="SSF49772">
    <property type="entry name" value="Ecotin, trypsin inhibitor"/>
    <property type="match status" value="1"/>
</dbReference>
<evidence type="ECO:0000255" key="1">
    <source>
        <dbReference type="HAMAP-Rule" id="MF_00706"/>
    </source>
</evidence>
<gene>
    <name evidence="1" type="primary">eco</name>
    <name type="ordered locus">Pput_2652</name>
</gene>